<accession>Q9H306</accession>
<accession>Q6UWK6</accession>
<comment type="function">
    <text evidence="1">Matrix metalloproteinases degrade protein components of the extracellular matrix such as fibronectin, laminin, gelatins and/or collagens.</text>
</comment>
<comment type="cofactor">
    <cofactor evidence="1">
        <name>Ca(2+)</name>
        <dbReference type="ChEBI" id="CHEBI:29108"/>
    </cofactor>
    <text evidence="1">Binds 4 Ca(2+) ions per subunit.</text>
</comment>
<comment type="cofactor">
    <cofactor evidence="1">
        <name>Zn(2+)</name>
        <dbReference type="ChEBI" id="CHEBI:29105"/>
    </cofactor>
    <text evidence="1">Binds 2 Zn(2+) ions per subunit.</text>
</comment>
<comment type="subcellular location">
    <subcellularLocation>
        <location evidence="6">Endoplasmic reticulum</location>
    </subcellularLocation>
    <text evidence="6">Retained in the endoplasmic reticulum due to a C-terminal extension (CTE).</text>
</comment>
<comment type="tissue specificity">
    <text evidence="5 7">Expressed in B-cells (PubMed:14506071). Expressed in a subset of endometrial macrophages related to menstruation and in ovarian and peritoneal endometriotic lesions (at protein level) (PubMed:24810263).</text>
</comment>
<comment type="domain">
    <text>The conserved cysteine present in the cysteine-switch motif binds the catalytic zinc ion, thus inhibiting the enzyme. The dissociation of the cysteine from the zinc ion upon the activation-peptide release activates the enzyme.</text>
</comment>
<comment type="PTM">
    <text evidence="6">N-glycosylated.</text>
</comment>
<comment type="similarity">
    <text evidence="9">Belongs to the peptidase M10A family.</text>
</comment>
<protein>
    <recommendedName>
        <fullName>Matrix metalloproteinase-27</fullName>
        <shortName>MMP-27</shortName>
        <ecNumber>3.4.24.-</ecNumber>
    </recommendedName>
</protein>
<proteinExistence type="evidence at protein level"/>
<evidence type="ECO:0000250" key="1"/>
<evidence type="ECO:0000255" key="2"/>
<evidence type="ECO:0000255" key="3">
    <source>
        <dbReference type="PROSITE-ProRule" id="PRU10095"/>
    </source>
</evidence>
<evidence type="ECO:0000269" key="4">
    <source>
    </source>
</evidence>
<evidence type="ECO:0000269" key="5">
    <source>
    </source>
</evidence>
<evidence type="ECO:0000269" key="6">
    <source>
    </source>
</evidence>
<evidence type="ECO:0000269" key="7">
    <source>
    </source>
</evidence>
<evidence type="ECO:0000269" key="8">
    <source ref="1"/>
</evidence>
<evidence type="ECO:0000305" key="9"/>
<dbReference type="EC" id="3.4.24.-"/>
<dbReference type="EMBL" id="AF195192">
    <property type="protein sequence ID" value="AAG28453.1"/>
    <property type="molecule type" value="mRNA"/>
</dbReference>
<dbReference type="EMBL" id="AY358752">
    <property type="protein sequence ID" value="AAQ89112.1"/>
    <property type="molecule type" value="mRNA"/>
</dbReference>
<dbReference type="EMBL" id="AP000647">
    <property type="status" value="NOT_ANNOTATED_CDS"/>
    <property type="molecule type" value="Genomic_DNA"/>
</dbReference>
<dbReference type="EMBL" id="AP000851">
    <property type="status" value="NOT_ANNOTATED_CDS"/>
    <property type="molecule type" value="Genomic_DNA"/>
</dbReference>
<dbReference type="CCDS" id="CCDS8319.1"/>
<dbReference type="RefSeq" id="NP_071405.2">
    <property type="nucleotide sequence ID" value="NM_022122.3"/>
</dbReference>
<dbReference type="SMR" id="Q9H306"/>
<dbReference type="BioGRID" id="122039">
    <property type="interactions" value="10"/>
</dbReference>
<dbReference type="STRING" id="9606.ENSP00000260229"/>
<dbReference type="DrugBank" id="DB00786">
    <property type="generic name" value="Marimastat"/>
</dbReference>
<dbReference type="MEROPS" id="M10.027"/>
<dbReference type="GlyCosmos" id="Q9H306">
    <property type="glycosylation" value="3 sites, No reported glycans"/>
</dbReference>
<dbReference type="GlyGen" id="Q9H306">
    <property type="glycosylation" value="3 sites, 1 N-linked glycan (1 site)"/>
</dbReference>
<dbReference type="iPTMnet" id="Q9H306"/>
<dbReference type="PhosphoSitePlus" id="Q9H306"/>
<dbReference type="BioMuta" id="MMP27"/>
<dbReference type="DMDM" id="296437372"/>
<dbReference type="MassIVE" id="Q9H306"/>
<dbReference type="PaxDb" id="9606-ENSP00000260229"/>
<dbReference type="PeptideAtlas" id="Q9H306"/>
<dbReference type="ProteomicsDB" id="80640"/>
<dbReference type="Antibodypedia" id="31767">
    <property type="antibodies" value="136 antibodies from 28 providers"/>
</dbReference>
<dbReference type="DNASU" id="64066"/>
<dbReference type="Ensembl" id="ENST00000260229.5">
    <property type="protein sequence ID" value="ENSP00000260229.4"/>
    <property type="gene ID" value="ENSG00000137675.5"/>
</dbReference>
<dbReference type="GeneID" id="64066"/>
<dbReference type="KEGG" id="hsa:64066"/>
<dbReference type="MANE-Select" id="ENST00000260229.5">
    <property type="protein sequence ID" value="ENSP00000260229.4"/>
    <property type="RefSeq nucleotide sequence ID" value="NM_022122.3"/>
    <property type="RefSeq protein sequence ID" value="NP_071405.2"/>
</dbReference>
<dbReference type="UCSC" id="uc001phd.2">
    <property type="organism name" value="human"/>
</dbReference>
<dbReference type="AGR" id="HGNC:14250"/>
<dbReference type="CTD" id="64066"/>
<dbReference type="DisGeNET" id="64066"/>
<dbReference type="GeneCards" id="MMP27"/>
<dbReference type="HGNC" id="HGNC:14250">
    <property type="gene designation" value="MMP27"/>
</dbReference>
<dbReference type="HPA" id="ENSG00000137675">
    <property type="expression patterns" value="Tissue enhanced (breast, salivary gland, skin)"/>
</dbReference>
<dbReference type="MIM" id="618101">
    <property type="type" value="gene"/>
</dbReference>
<dbReference type="neXtProt" id="NX_Q9H306"/>
<dbReference type="OpenTargets" id="ENSG00000137675"/>
<dbReference type="PharmGKB" id="PA30884"/>
<dbReference type="VEuPathDB" id="HostDB:ENSG00000137675"/>
<dbReference type="eggNOG" id="KOG1565">
    <property type="taxonomic scope" value="Eukaryota"/>
</dbReference>
<dbReference type="GeneTree" id="ENSGT00940000161159"/>
<dbReference type="HOGENOM" id="CLU_015489_6_0_1"/>
<dbReference type="InParanoid" id="Q9H306"/>
<dbReference type="OMA" id="IPHACDP"/>
<dbReference type="OrthoDB" id="406838at2759"/>
<dbReference type="PAN-GO" id="Q9H306">
    <property type="GO annotations" value="3 GO annotations based on evolutionary models"/>
</dbReference>
<dbReference type="PhylomeDB" id="Q9H306"/>
<dbReference type="TreeFam" id="TF315428"/>
<dbReference type="PathwayCommons" id="Q9H306"/>
<dbReference type="SIGNOR" id="Q9H306"/>
<dbReference type="BioGRID-ORCS" id="64066">
    <property type="hits" value="9 hits in 1153 CRISPR screens"/>
</dbReference>
<dbReference type="GeneWiki" id="MMP27"/>
<dbReference type="GenomeRNAi" id="64066"/>
<dbReference type="Pharos" id="Q9H306">
    <property type="development level" value="Tbio"/>
</dbReference>
<dbReference type="PRO" id="PR:Q9H306"/>
<dbReference type="Proteomes" id="UP000005640">
    <property type="component" value="Chromosome 11"/>
</dbReference>
<dbReference type="RNAct" id="Q9H306">
    <property type="molecule type" value="protein"/>
</dbReference>
<dbReference type="Bgee" id="ENSG00000137675">
    <property type="expression patterns" value="Expressed in skin of hip and 56 other cell types or tissues"/>
</dbReference>
<dbReference type="GO" id="GO:0005783">
    <property type="term" value="C:endoplasmic reticulum"/>
    <property type="evidence" value="ECO:0000314"/>
    <property type="project" value="UniProtKB"/>
</dbReference>
<dbReference type="GO" id="GO:0031012">
    <property type="term" value="C:extracellular matrix"/>
    <property type="evidence" value="ECO:0007669"/>
    <property type="project" value="InterPro"/>
</dbReference>
<dbReference type="GO" id="GO:0004222">
    <property type="term" value="F:metalloendopeptidase activity"/>
    <property type="evidence" value="ECO:0000318"/>
    <property type="project" value="GO_Central"/>
</dbReference>
<dbReference type="GO" id="GO:0008270">
    <property type="term" value="F:zinc ion binding"/>
    <property type="evidence" value="ECO:0007669"/>
    <property type="project" value="InterPro"/>
</dbReference>
<dbReference type="GO" id="GO:0030574">
    <property type="term" value="P:collagen catabolic process"/>
    <property type="evidence" value="ECO:0000318"/>
    <property type="project" value="GO_Central"/>
</dbReference>
<dbReference type="GO" id="GO:0030198">
    <property type="term" value="P:extracellular matrix organization"/>
    <property type="evidence" value="ECO:0000318"/>
    <property type="project" value="GO_Central"/>
</dbReference>
<dbReference type="GO" id="GO:0006508">
    <property type="term" value="P:proteolysis"/>
    <property type="evidence" value="ECO:0007669"/>
    <property type="project" value="UniProtKB-KW"/>
</dbReference>
<dbReference type="CDD" id="cd00094">
    <property type="entry name" value="HX"/>
    <property type="match status" value="1"/>
</dbReference>
<dbReference type="CDD" id="cd04278">
    <property type="entry name" value="ZnMc_MMP"/>
    <property type="match status" value="1"/>
</dbReference>
<dbReference type="FunFam" id="3.40.390.10:FF:000035">
    <property type="entry name" value="Matrix metallopeptidase 27"/>
    <property type="match status" value="1"/>
</dbReference>
<dbReference type="FunFam" id="2.110.10.10:FF:000002">
    <property type="entry name" value="Matrix metallopeptidase 3"/>
    <property type="match status" value="1"/>
</dbReference>
<dbReference type="Gene3D" id="3.40.390.10">
    <property type="entry name" value="Collagenase (Catalytic Domain)"/>
    <property type="match status" value="1"/>
</dbReference>
<dbReference type="Gene3D" id="2.110.10.10">
    <property type="entry name" value="Hemopexin-like domain"/>
    <property type="match status" value="1"/>
</dbReference>
<dbReference type="InterPro" id="IPR000585">
    <property type="entry name" value="Hemopexin-like_dom"/>
</dbReference>
<dbReference type="InterPro" id="IPR036375">
    <property type="entry name" value="Hemopexin-like_dom_sf"/>
</dbReference>
<dbReference type="InterPro" id="IPR018487">
    <property type="entry name" value="Hemopexin-like_repeat"/>
</dbReference>
<dbReference type="InterPro" id="IPR018486">
    <property type="entry name" value="Hemopexin_CS"/>
</dbReference>
<dbReference type="InterPro" id="IPR033739">
    <property type="entry name" value="M10A_MMP"/>
</dbReference>
<dbReference type="InterPro" id="IPR024079">
    <property type="entry name" value="MetalloPept_cat_dom_sf"/>
</dbReference>
<dbReference type="InterPro" id="IPR001818">
    <property type="entry name" value="Pept_M10_metallopeptidase"/>
</dbReference>
<dbReference type="InterPro" id="IPR021190">
    <property type="entry name" value="Pept_M10A"/>
</dbReference>
<dbReference type="InterPro" id="IPR021158">
    <property type="entry name" value="Pept_M10A_Zn_BS"/>
</dbReference>
<dbReference type="InterPro" id="IPR006026">
    <property type="entry name" value="Peptidase_Metallo"/>
</dbReference>
<dbReference type="InterPro" id="IPR002477">
    <property type="entry name" value="Peptidoglycan-bd-like"/>
</dbReference>
<dbReference type="InterPro" id="IPR036365">
    <property type="entry name" value="PGBD-like_sf"/>
</dbReference>
<dbReference type="PANTHER" id="PTHR10201">
    <property type="entry name" value="MATRIX METALLOPROTEINASE"/>
    <property type="match status" value="1"/>
</dbReference>
<dbReference type="PANTHER" id="PTHR10201:SF115">
    <property type="entry name" value="MATRIX METALLOPROTEINASE-27"/>
    <property type="match status" value="1"/>
</dbReference>
<dbReference type="Pfam" id="PF00045">
    <property type="entry name" value="Hemopexin"/>
    <property type="match status" value="3"/>
</dbReference>
<dbReference type="Pfam" id="PF00413">
    <property type="entry name" value="Peptidase_M10"/>
    <property type="match status" value="1"/>
</dbReference>
<dbReference type="Pfam" id="PF01471">
    <property type="entry name" value="PG_binding_1"/>
    <property type="match status" value="1"/>
</dbReference>
<dbReference type="PIRSF" id="PIRSF001191">
    <property type="entry name" value="Peptidase_M10A_matrix"/>
    <property type="match status" value="1"/>
</dbReference>
<dbReference type="PRINTS" id="PR00138">
    <property type="entry name" value="MATRIXIN"/>
</dbReference>
<dbReference type="SMART" id="SM00120">
    <property type="entry name" value="HX"/>
    <property type="match status" value="4"/>
</dbReference>
<dbReference type="SMART" id="SM00235">
    <property type="entry name" value="ZnMc"/>
    <property type="match status" value="1"/>
</dbReference>
<dbReference type="SUPFAM" id="SSF50923">
    <property type="entry name" value="Hemopexin-like domain"/>
    <property type="match status" value="1"/>
</dbReference>
<dbReference type="SUPFAM" id="SSF55486">
    <property type="entry name" value="Metalloproteases ('zincins'), catalytic domain"/>
    <property type="match status" value="1"/>
</dbReference>
<dbReference type="SUPFAM" id="SSF47090">
    <property type="entry name" value="PGBD-like"/>
    <property type="match status" value="1"/>
</dbReference>
<dbReference type="PROSITE" id="PS00546">
    <property type="entry name" value="CYSTEINE_SWITCH"/>
    <property type="match status" value="1"/>
</dbReference>
<dbReference type="PROSITE" id="PS00024">
    <property type="entry name" value="HEMOPEXIN"/>
    <property type="match status" value="1"/>
</dbReference>
<dbReference type="PROSITE" id="PS51642">
    <property type="entry name" value="HEMOPEXIN_2"/>
    <property type="match status" value="4"/>
</dbReference>
<dbReference type="PROSITE" id="PS00142">
    <property type="entry name" value="ZINC_PROTEASE"/>
    <property type="match status" value="1"/>
</dbReference>
<feature type="signal peptide" evidence="2">
    <location>
        <begin position="1"/>
        <end position="17"/>
    </location>
</feature>
<feature type="propeptide" id="PRO_0000287561" description="Activation peptide" evidence="1">
    <location>
        <begin position="18"/>
        <end position="98"/>
    </location>
</feature>
<feature type="chain" id="PRO_0000287562" description="Matrix metalloproteinase-27">
    <location>
        <begin position="99"/>
        <end position="513"/>
    </location>
</feature>
<feature type="repeat" description="Hemopexin 1">
    <location>
        <begin position="276"/>
        <end position="325"/>
    </location>
</feature>
<feature type="repeat" description="Hemopexin 2">
    <location>
        <begin position="326"/>
        <end position="371"/>
    </location>
</feature>
<feature type="repeat" description="Hemopexin 3">
    <location>
        <begin position="373"/>
        <end position="421"/>
    </location>
</feature>
<feature type="repeat" description="Hemopexin 4">
    <location>
        <begin position="422"/>
        <end position="465"/>
    </location>
</feature>
<feature type="region of interest" description="Required for retention in the endoplasmic reticulum" evidence="6">
    <location>
        <begin position="466"/>
        <end position="513"/>
    </location>
</feature>
<feature type="short sequence motif" description="Cysteine switch" evidence="1">
    <location>
        <begin position="89"/>
        <end position="96"/>
    </location>
</feature>
<feature type="active site" evidence="3">
    <location>
        <position position="217"/>
    </location>
</feature>
<feature type="binding site" description="in inhibited form" evidence="1">
    <location>
        <position position="91"/>
    </location>
    <ligand>
        <name>Zn(2+)</name>
        <dbReference type="ChEBI" id="CHEBI:29105"/>
        <label>2</label>
        <note>catalytic</note>
    </ligand>
</feature>
<feature type="binding site" evidence="1">
    <location>
        <position position="121"/>
    </location>
    <ligand>
        <name>Ca(2+)</name>
        <dbReference type="ChEBI" id="CHEBI:29108"/>
        <label>1</label>
    </ligand>
</feature>
<feature type="binding site" evidence="1">
    <location>
        <position position="155"/>
    </location>
    <ligand>
        <name>Ca(2+)</name>
        <dbReference type="ChEBI" id="CHEBI:29108"/>
        <label>2</label>
    </ligand>
</feature>
<feature type="binding site" evidence="1">
    <location>
        <position position="165"/>
    </location>
    <ligand>
        <name>Zn(2+)</name>
        <dbReference type="ChEBI" id="CHEBI:29105"/>
        <label>1</label>
    </ligand>
</feature>
<feature type="binding site" evidence="1">
    <location>
        <position position="173"/>
    </location>
    <ligand>
        <name>Ca(2+)</name>
        <dbReference type="ChEBI" id="CHEBI:29108"/>
        <label>3</label>
    </ligand>
</feature>
<feature type="binding site" evidence="1">
    <location>
        <position position="174"/>
    </location>
    <ligand>
        <name>Ca(2+)</name>
        <dbReference type="ChEBI" id="CHEBI:29108"/>
        <label>3</label>
    </ligand>
</feature>
<feature type="binding site" evidence="1">
    <location>
        <position position="178"/>
    </location>
    <ligand>
        <name>Ca(2+)</name>
        <dbReference type="ChEBI" id="CHEBI:29108"/>
        <label>3</label>
    </ligand>
</feature>
<feature type="binding site" evidence="1">
    <location>
        <position position="181"/>
    </location>
    <ligand>
        <name>Zn(2+)</name>
        <dbReference type="ChEBI" id="CHEBI:29105"/>
        <label>1</label>
    </ligand>
</feature>
<feature type="binding site" evidence="1">
    <location>
        <position position="188"/>
    </location>
    <ligand>
        <name>Ca(2+)</name>
        <dbReference type="ChEBI" id="CHEBI:29108"/>
        <label>2</label>
    </ligand>
</feature>
<feature type="binding site" evidence="1">
    <location>
        <position position="192"/>
    </location>
    <ligand>
        <name>Ca(2+)</name>
        <dbReference type="ChEBI" id="CHEBI:29108"/>
        <label>2</label>
    </ligand>
</feature>
<feature type="binding site" evidence="1">
    <location>
        <position position="194"/>
    </location>
    <ligand>
        <name>Zn(2+)</name>
        <dbReference type="ChEBI" id="CHEBI:29105"/>
        <label>1</label>
    </ligand>
</feature>
<feature type="binding site" evidence="1">
    <location>
        <position position="196"/>
    </location>
    <ligand>
        <name>Ca(2+)</name>
        <dbReference type="ChEBI" id="CHEBI:29108"/>
        <label>3</label>
    </ligand>
</feature>
<feature type="binding site" evidence="1">
    <location>
        <position position="199"/>
    </location>
    <ligand>
        <name>Ca(2+)</name>
        <dbReference type="ChEBI" id="CHEBI:29108"/>
        <label>1</label>
    </ligand>
</feature>
<feature type="binding site" evidence="1">
    <location>
        <position position="199"/>
    </location>
    <ligand>
        <name>Ca(2+)</name>
        <dbReference type="ChEBI" id="CHEBI:29108"/>
        <label>3</label>
    </ligand>
</feature>
<feature type="binding site" evidence="1">
    <location>
        <position position="216"/>
    </location>
    <ligand>
        <name>Zn(2+)</name>
        <dbReference type="ChEBI" id="CHEBI:29105"/>
        <label>2</label>
        <note>catalytic</note>
    </ligand>
</feature>
<feature type="binding site" evidence="1">
    <location>
        <position position="220"/>
    </location>
    <ligand>
        <name>Zn(2+)</name>
        <dbReference type="ChEBI" id="CHEBI:29105"/>
        <label>2</label>
        <note>catalytic</note>
    </ligand>
</feature>
<feature type="binding site" evidence="1">
    <location>
        <position position="226"/>
    </location>
    <ligand>
        <name>Zn(2+)</name>
        <dbReference type="ChEBI" id="CHEBI:29105"/>
        <label>2</label>
        <note>catalytic</note>
    </ligand>
</feature>
<feature type="binding site" evidence="1">
    <location>
        <position position="286"/>
    </location>
    <ligand>
        <name>Ca(2+)</name>
        <dbReference type="ChEBI" id="CHEBI:29108"/>
        <label>4</label>
    </ligand>
</feature>
<feature type="binding site" evidence="1">
    <location>
        <position position="377"/>
    </location>
    <ligand>
        <name>Ca(2+)</name>
        <dbReference type="ChEBI" id="CHEBI:29108"/>
        <label>4</label>
    </ligand>
</feature>
<feature type="binding site" evidence="1">
    <location>
        <position position="426"/>
    </location>
    <ligand>
        <name>Ca(2+)</name>
        <dbReference type="ChEBI" id="CHEBI:29108"/>
        <label>4</label>
    </ligand>
</feature>
<feature type="glycosylation site" description="N-linked (GlcNAc...) asparagine" evidence="6">
    <location>
        <position position="55"/>
    </location>
</feature>
<feature type="glycosylation site" description="N-linked (GlcNAc...) asparagine" evidence="2 6">
    <location>
        <position position="110"/>
    </location>
</feature>
<feature type="glycosylation site" description="N-linked (GlcNAc...) asparagine" evidence="6">
    <location>
        <position position="452"/>
    </location>
</feature>
<feature type="disulfide bond" evidence="1">
    <location>
        <begin position="279"/>
        <end position="465"/>
    </location>
</feature>
<feature type="sequence variant" id="VAR_032326" description="In dbSNP:rs12099177.">
    <original>R</original>
    <variation>W</variation>
    <location>
        <position position="22"/>
    </location>
</feature>
<feature type="sequence variant" id="VAR_032327" description="In dbSNP:rs1939015." evidence="8">
    <original>T</original>
    <variation>M</variation>
    <location>
        <position position="24"/>
    </location>
</feature>
<feature type="sequence variant" id="VAR_032328" description="In dbSNP:rs2846707." evidence="8">
    <original>M</original>
    <variation>V</variation>
    <location>
        <position position="30"/>
    </location>
</feature>
<feature type="sequence variant" id="VAR_032329" description="In dbSNP:rs1276286." evidence="4">
    <original>E</original>
    <variation>V</variation>
    <location>
        <position position="266"/>
    </location>
</feature>
<feature type="sequence variant" id="VAR_032330" description="In dbSNP:rs35616217.">
    <original>W</original>
    <variation>L</variation>
    <location>
        <position position="304"/>
    </location>
</feature>
<feature type="sequence variant" id="VAR_032331" description="In dbSNP:rs2509010." evidence="4">
    <original>D</original>
    <variation>N</variation>
    <location>
        <position position="447"/>
    </location>
</feature>
<feature type="sequence variant" id="VAR_032332" description="In dbSNP:rs35822551.">
    <original>I</original>
    <variation>V</variation>
    <location>
        <position position="477"/>
    </location>
</feature>
<feature type="mutagenesis site" description="Loss of N-glycosylation; when associated with Q-110 and Q-452." evidence="6">
    <original>N</original>
    <variation>Q</variation>
    <location>
        <position position="55"/>
    </location>
</feature>
<feature type="mutagenesis site" description="Loss of N-glycosylation; when associated with Q-55 and Q-452." evidence="6">
    <original>N</original>
    <variation>Q</variation>
    <location>
        <position position="110"/>
    </location>
</feature>
<feature type="mutagenesis site" description="Loss of N-glycosylation; when associated with Q-55 and Q-110." evidence="6">
    <original>N</original>
    <variation>Q</variation>
    <location>
        <position position="452"/>
    </location>
</feature>
<gene>
    <name type="primary">MMP27</name>
    <name type="ORF">UNQ2503/PRO5992</name>
</gene>
<sequence>MKRLLLLFLFFITFSSAFPLVRMTENEENMQLAQAYLNQFYSLEIEGNHLVQSKNRSLIDDKIREMQAFFGLTVTGKLDSNTLEIMKTPRCGVPDVGQYGYTLPGWRKYNLTYRIINYTPDMARAAVDEAIQEGLEVWSKVTPLKFTKISKGIADIMIAFRTRVHGRCPRYFDGPLGVLGHAFPPGPGLGGDTHFDEDENWTKDGAGFNLFLVAAHEFGHALGLSHSNDQTALMFPNYVSLDPRKYPLSQDDINGIQSIYGGLPKEPAKPKEPTIPHACDPDLTFDAITTFRREVMFFKGRHLWRIYYDITDVEFELIASFWPSLPADLQAAYENPRDKILVFKDENFWMIRGYAVLPDYPKSIHTLGFPGRVKKIDAAVCDKTTRKTYFFVGIWCWRFDEMTQTMDKGFPQRVVKHFPGISIRVDAAFQYKGFFFFSRGSKQFEYDIKTKNITRIMRTNTWFQCKEPKNSSFGFDINKEKAHSGGIKILYHKSLSLFIFGIVHLLKNTSIYQ</sequence>
<name>MMP27_HUMAN</name>
<organism>
    <name type="scientific">Homo sapiens</name>
    <name type="common">Human</name>
    <dbReference type="NCBI Taxonomy" id="9606"/>
    <lineage>
        <taxon>Eukaryota</taxon>
        <taxon>Metazoa</taxon>
        <taxon>Chordata</taxon>
        <taxon>Craniata</taxon>
        <taxon>Vertebrata</taxon>
        <taxon>Euteleostomi</taxon>
        <taxon>Mammalia</taxon>
        <taxon>Eutheria</taxon>
        <taxon>Euarchontoglires</taxon>
        <taxon>Primates</taxon>
        <taxon>Haplorrhini</taxon>
        <taxon>Catarrhini</taxon>
        <taxon>Hominidae</taxon>
        <taxon>Homo</taxon>
    </lineage>
</organism>
<keyword id="KW-0106">Calcium</keyword>
<keyword id="KW-0177">Collagen degradation</keyword>
<keyword id="KW-1015">Disulfide bond</keyword>
<keyword id="KW-0256">Endoplasmic reticulum</keyword>
<keyword id="KW-0325">Glycoprotein</keyword>
<keyword id="KW-0378">Hydrolase</keyword>
<keyword id="KW-0479">Metal-binding</keyword>
<keyword id="KW-0482">Metalloprotease</keyword>
<keyword id="KW-0645">Protease</keyword>
<keyword id="KW-1185">Reference proteome</keyword>
<keyword id="KW-0677">Repeat</keyword>
<keyword id="KW-0732">Signal</keyword>
<keyword id="KW-0862">Zinc</keyword>
<keyword id="KW-0865">Zymogen</keyword>
<reference key="1">
    <citation type="submission" date="1999-10" db="EMBL/GenBank/DDBJ databases">
        <title>Cloning of a novel matrix metalloproteinase homologous to stromelysins.</title>
        <authorList>
            <person name="Benoit de Coignac A."/>
            <person name="Elson G."/>
            <person name="Magistrelli G."/>
            <person name="Jeannin P."/>
            <person name="Delneste Y."/>
            <person name="Aubry J.-P."/>
            <person name="Berthier O."/>
            <person name="Bonnefoy J.-Y."/>
            <person name="Gauchat J.-F."/>
        </authorList>
    </citation>
    <scope>NUCLEOTIDE SEQUENCE [MRNA]</scope>
    <scope>VARIANTS MET-24 AND VAL-30</scope>
</reference>
<reference key="2">
    <citation type="journal article" date="2003" name="Genome Res.">
        <title>The secreted protein discovery initiative (SPDI), a large-scale effort to identify novel human secreted and transmembrane proteins: a bioinformatics assessment.</title>
        <authorList>
            <person name="Clark H.F."/>
            <person name="Gurney A.L."/>
            <person name="Abaya E."/>
            <person name="Baker K."/>
            <person name="Baldwin D.T."/>
            <person name="Brush J."/>
            <person name="Chen J."/>
            <person name="Chow B."/>
            <person name="Chui C."/>
            <person name="Crowley C."/>
            <person name="Currell B."/>
            <person name="Deuel B."/>
            <person name="Dowd P."/>
            <person name="Eaton D."/>
            <person name="Foster J.S."/>
            <person name="Grimaldi C."/>
            <person name="Gu Q."/>
            <person name="Hass P.E."/>
            <person name="Heldens S."/>
            <person name="Huang A."/>
            <person name="Kim H.S."/>
            <person name="Klimowski L."/>
            <person name="Jin Y."/>
            <person name="Johnson S."/>
            <person name="Lee J."/>
            <person name="Lewis L."/>
            <person name="Liao D."/>
            <person name="Mark M.R."/>
            <person name="Robbie E."/>
            <person name="Sanchez C."/>
            <person name="Schoenfeld J."/>
            <person name="Seshagiri S."/>
            <person name="Simmons L."/>
            <person name="Singh J."/>
            <person name="Smith V."/>
            <person name="Stinson J."/>
            <person name="Vagts A."/>
            <person name="Vandlen R.L."/>
            <person name="Watanabe C."/>
            <person name="Wieand D."/>
            <person name="Woods K."/>
            <person name="Xie M.-H."/>
            <person name="Yansura D.G."/>
            <person name="Yi S."/>
            <person name="Yu G."/>
            <person name="Yuan J."/>
            <person name="Zhang M."/>
            <person name="Zhang Z."/>
            <person name="Goddard A.D."/>
            <person name="Wood W.I."/>
            <person name="Godowski P.J."/>
            <person name="Gray A.M."/>
        </authorList>
    </citation>
    <scope>NUCLEOTIDE SEQUENCE [LARGE SCALE MRNA]</scope>
    <scope>VARIANTS VAL-266 AND ASN-447</scope>
</reference>
<reference key="3">
    <citation type="journal article" date="2006" name="Nature">
        <title>Human chromosome 11 DNA sequence and analysis including novel gene identification.</title>
        <authorList>
            <person name="Taylor T.D."/>
            <person name="Noguchi H."/>
            <person name="Totoki Y."/>
            <person name="Toyoda A."/>
            <person name="Kuroki Y."/>
            <person name="Dewar K."/>
            <person name="Lloyd C."/>
            <person name="Itoh T."/>
            <person name="Takeda T."/>
            <person name="Kim D.-W."/>
            <person name="She X."/>
            <person name="Barlow K.F."/>
            <person name="Bloom T."/>
            <person name="Bruford E."/>
            <person name="Chang J.L."/>
            <person name="Cuomo C.A."/>
            <person name="Eichler E."/>
            <person name="FitzGerald M.G."/>
            <person name="Jaffe D.B."/>
            <person name="LaButti K."/>
            <person name="Nicol R."/>
            <person name="Park H.-S."/>
            <person name="Seaman C."/>
            <person name="Sougnez C."/>
            <person name="Yang X."/>
            <person name="Zimmer A.R."/>
            <person name="Zody M.C."/>
            <person name="Birren B.W."/>
            <person name="Nusbaum C."/>
            <person name="Fujiyama A."/>
            <person name="Hattori M."/>
            <person name="Rogers J."/>
            <person name="Lander E.S."/>
            <person name="Sakaki Y."/>
        </authorList>
    </citation>
    <scope>NUCLEOTIDE SEQUENCE [LARGE SCALE GENOMIC DNA]</scope>
</reference>
<reference key="4">
    <citation type="journal article" date="2003" name="Brain">
        <title>Analyses of all matrix metalloproteinase members in leukocytes emphasize monocytes as major inflammatory mediators in multiple sclerosis.</title>
        <authorList>
            <person name="Bar-Or A."/>
            <person name="Nuttall R.K."/>
            <person name="Duddy M."/>
            <person name="Alter A."/>
            <person name="Kim H.J."/>
            <person name="Ifergan I."/>
            <person name="Pennington C.J."/>
            <person name="Bourgoin P."/>
            <person name="Edwards D.R."/>
            <person name="Yong V.W."/>
        </authorList>
    </citation>
    <scope>TISSUE SPECIFICITY</scope>
</reference>
<reference key="5">
    <citation type="journal article" date="2014" name="Mol. Hum. Reprod.">
        <title>Matrix metalloproteinase-27 is expressed in CD163+/CD206+ M2 macrophages in the cycling human endometrium and in superficial endometriotic lesions.</title>
        <authorList>
            <person name="Cominelli A."/>
            <person name="Gaide Chevronnay H.P."/>
            <person name="Lemoine P."/>
            <person name="Courtoy P.J."/>
            <person name="Marbaix E."/>
            <person name="Henriet P."/>
        </authorList>
    </citation>
    <scope>TISSUE SPECIFICITY</scope>
</reference>
<reference key="6">
    <citation type="journal article" date="2014" name="Traffic">
        <title>A unique C-terminal domain allows retention of matrix metalloproteinase-27 in the endoplasmic reticulum.</title>
        <authorList>
            <person name="Cominelli A."/>
            <person name="Halbout M."/>
            <person name="N'Kuli F."/>
            <person name="Lemoine P."/>
            <person name="Courtoy P.J."/>
            <person name="Marbaix E."/>
            <person name="Tyteca D."/>
            <person name="Henriet P."/>
        </authorList>
    </citation>
    <scope>SUBCELLULAR LOCATION</scope>
    <scope>GLYCOSYLATION AT ASN-55; ASN-110 AND ASN-452</scope>
    <scope>TOPOLOGY</scope>
    <scope>REGION</scope>
    <scope>MUTAGENESIS OF ASN-55; ASN-110 AND ASN-452</scope>
</reference>